<gene>
    <name type="primary">Hsd17b7</name>
</gene>
<keyword id="KW-0903">Direct protein sequencing</keyword>
<keyword id="KW-0256">Endoplasmic reticulum</keyword>
<keyword id="KW-0325">Glycoprotein</keyword>
<keyword id="KW-0444">Lipid biosynthesis</keyword>
<keyword id="KW-0443">Lipid metabolism</keyword>
<keyword id="KW-0472">Membrane</keyword>
<keyword id="KW-0520">NAD</keyword>
<keyword id="KW-0521">NADP</keyword>
<keyword id="KW-0560">Oxidoreductase</keyword>
<keyword id="KW-1185">Reference proteome</keyword>
<keyword id="KW-0752">Steroid biosynthesis</keyword>
<keyword id="KW-0812">Transmembrane</keyword>
<keyword id="KW-1133">Transmembrane helix</keyword>
<sequence>MRKVVLITGASSGIGLALCGRLLAEDDDLHLCLACRNLSKAGAVRDALLASHPSAEVSIVQMDVSNLQSVVRGAEEVKRRFQRLDYLYLNAGIMPNPQLNLKAFFCGIFSRNVIHMFSTAEGLLTQNDKITADGFQEVFETNLFGHFILIRELEPLLCHSDNPSQLIWTSSRNAKKSNFSLEDIQHAKGQEPYSSSKYATDLLNVALNRNFNQKGLYSSVTCPGVVMTNLTYGILPPFVWTLLLPVIWLLRFFAHAFTVTPYNGAEALVWLFHQKPESLNPLTKYLSGTTGLGTNYVKGQKMDVDEDTAEKFYKTLLELEKQVRITIQKSDHHS</sequence>
<organism>
    <name type="scientific">Rattus norvegicus</name>
    <name type="common">Rat</name>
    <dbReference type="NCBI Taxonomy" id="10116"/>
    <lineage>
        <taxon>Eukaryota</taxon>
        <taxon>Metazoa</taxon>
        <taxon>Chordata</taxon>
        <taxon>Craniata</taxon>
        <taxon>Vertebrata</taxon>
        <taxon>Euteleostomi</taxon>
        <taxon>Mammalia</taxon>
        <taxon>Eutheria</taxon>
        <taxon>Euarchontoglires</taxon>
        <taxon>Glires</taxon>
        <taxon>Rodentia</taxon>
        <taxon>Myomorpha</taxon>
        <taxon>Muroidea</taxon>
        <taxon>Muridae</taxon>
        <taxon>Murinae</taxon>
        <taxon>Rattus</taxon>
    </lineage>
</organism>
<protein>
    <recommendedName>
        <fullName evidence="9">3-keto-steroid reductase/17-beta-hydroxysteroid dehydrogenase 7</fullName>
    </recommendedName>
    <alternativeName>
        <fullName>17-beta-hydroxysteroid dehydrogenase 7</fullName>
        <shortName>17-beta-HSD 7</shortName>
    </alternativeName>
    <alternativeName>
        <fullName>3-keto-steroid reductase</fullName>
        <ecNumber evidence="10">1.1.1.270</ecNumber>
    </alternativeName>
    <alternativeName>
        <fullName>Dihydrotestosterone oxidoreductase</fullName>
        <ecNumber evidence="3">1.1.1.210</ecNumber>
    </alternativeName>
    <alternativeName>
        <fullName>Estradiol 17-beta-dehydrogenase 7</fullName>
        <ecNumber evidence="7">1.1.1.62</ecNumber>
    </alternativeName>
    <alternativeName>
        <fullName evidence="8">PRL receptor-associated protein</fullName>
        <shortName evidence="8">PRAP</shortName>
    </alternativeName>
</protein>
<proteinExistence type="evidence at protein level"/>
<feature type="chain" id="PRO_0000054588" description="3-keto-steroid reductase/17-beta-hydroxysteroid dehydrogenase 7">
    <location>
        <begin position="1"/>
        <end position="334"/>
    </location>
</feature>
<feature type="topological domain" description="Extracellular" evidence="4">
    <location>
        <begin position="1"/>
        <end position="229"/>
    </location>
</feature>
<feature type="transmembrane region" description="Helical" evidence="4">
    <location>
        <begin position="230"/>
        <end position="250"/>
    </location>
</feature>
<feature type="topological domain" description="Cytoplasmic" evidence="4">
    <location>
        <begin position="251"/>
        <end position="334"/>
    </location>
</feature>
<feature type="active site" description="Proton acceptor" evidence="1">
    <location>
        <position position="193"/>
    </location>
</feature>
<feature type="binding site" evidence="4">
    <location>
        <begin position="8"/>
        <end position="15"/>
    </location>
    <ligand>
        <name>NAD(+)</name>
        <dbReference type="ChEBI" id="CHEBI:57540"/>
    </ligand>
</feature>
<feature type="binding site" evidence="1">
    <location>
        <position position="171"/>
    </location>
    <ligand>
        <name>substrate</name>
    </ligand>
</feature>
<feature type="glycosylation site" description="N-linked (GlcNAc...) asparagine" evidence="4">
    <location>
        <position position="37"/>
    </location>
</feature>
<feature type="glycosylation site" description="N-linked (GlcNAc...) asparagine" evidence="4">
    <location>
        <position position="178"/>
    </location>
</feature>
<feature type="glycosylation site" description="N-linked (GlcNAc...) asparagine" evidence="4">
    <location>
        <position position="229"/>
    </location>
</feature>
<accession>Q62904</accession>
<comment type="function">
    <text evidence="3 5 7">Bifunctional enzyme involved in steroid-hormone metabolism and cholesterol biosynthesis (PubMed:6946726, PubMed:9658408). Catalyzes the NADP(H)-dependent reduction of estrogens and androgens and regulates the biological potency of these steroids (By similarity) (PubMed:9658408). Converts estrone (E1) to a more potent estrogen, 17beta-estradiol (E2) (PubMed:9658408). Converts dihydrotestosterone (DHT) to an inactive form. Also participates in the post-squalene cholesterol biosynthesis, as a 3-ketosteroid reductase (By similarity).</text>
</comment>
<comment type="catalytic activity">
    <reaction evidence="7">
        <text>17beta-estradiol + NADP(+) = estrone + NADPH + H(+)</text>
        <dbReference type="Rhea" id="RHEA:24616"/>
        <dbReference type="ChEBI" id="CHEBI:15378"/>
        <dbReference type="ChEBI" id="CHEBI:16469"/>
        <dbReference type="ChEBI" id="CHEBI:17263"/>
        <dbReference type="ChEBI" id="CHEBI:57783"/>
        <dbReference type="ChEBI" id="CHEBI:58349"/>
        <dbReference type="EC" id="1.1.1.62"/>
    </reaction>
    <physiologicalReaction direction="right-to-left" evidence="11">
        <dbReference type="Rhea" id="RHEA:24618"/>
    </physiologicalReaction>
</comment>
<comment type="catalytic activity">
    <reaction evidence="10">
        <text>a 3beta-hydroxysteroid + NADP(+) = a 3-oxosteroid + NADPH + H(+)</text>
        <dbReference type="Rhea" id="RHEA:34787"/>
        <dbReference type="ChEBI" id="CHEBI:15378"/>
        <dbReference type="ChEBI" id="CHEBI:36836"/>
        <dbReference type="ChEBI" id="CHEBI:47788"/>
        <dbReference type="ChEBI" id="CHEBI:57783"/>
        <dbReference type="ChEBI" id="CHEBI:58349"/>
        <dbReference type="EC" id="1.1.1.270"/>
    </reaction>
    <physiologicalReaction direction="right-to-left" evidence="10">
        <dbReference type="Rhea" id="RHEA:34789"/>
    </physiologicalReaction>
</comment>
<comment type="catalytic activity">
    <reaction evidence="10">
        <text>4alpha-methyl-5alpha-cholest-7-en-3beta-ol + NADP(+) = 4alpha-methyl-5alpha-cholest-7-en-3-one + NADPH + H(+)</text>
        <dbReference type="Rhea" id="RHEA:18409"/>
        <dbReference type="ChEBI" id="CHEBI:15378"/>
        <dbReference type="ChEBI" id="CHEBI:16495"/>
        <dbReference type="ChEBI" id="CHEBI:18378"/>
        <dbReference type="ChEBI" id="CHEBI:57783"/>
        <dbReference type="ChEBI" id="CHEBI:58349"/>
        <dbReference type="EC" id="1.1.1.270"/>
    </reaction>
    <physiologicalReaction direction="right-to-left" evidence="10">
        <dbReference type="Rhea" id="RHEA:18411"/>
    </physiologicalReaction>
</comment>
<comment type="catalytic activity">
    <reaction evidence="3">
        <text>4alpha-methyl-5alpha-cholest-8-en-3-one + NADPH + H(+) = 4alpha-methyl-5alpha-cholest-8-en-3beta-ol + NADP(+)</text>
        <dbReference type="Rhea" id="RHEA:46832"/>
        <dbReference type="ChEBI" id="CHEBI:15378"/>
        <dbReference type="ChEBI" id="CHEBI:57783"/>
        <dbReference type="ChEBI" id="CHEBI:58349"/>
        <dbReference type="ChEBI" id="CHEBI:87050"/>
        <dbReference type="ChEBI" id="CHEBI:87051"/>
    </reaction>
    <physiologicalReaction direction="left-to-right" evidence="3">
        <dbReference type="Rhea" id="RHEA:46833"/>
    </physiologicalReaction>
</comment>
<comment type="catalytic activity">
    <reaction evidence="3">
        <text>3-dehydro-4alpha-methylzymosterol + NADPH + H(+) = 4alpha-methylzymosterol + NADP(+)</text>
        <dbReference type="Rhea" id="RHEA:36379"/>
        <dbReference type="ChEBI" id="CHEBI:1949"/>
        <dbReference type="ChEBI" id="CHEBI:15378"/>
        <dbReference type="ChEBI" id="CHEBI:57783"/>
        <dbReference type="ChEBI" id="CHEBI:58349"/>
        <dbReference type="ChEBI" id="CHEBI:136486"/>
        <dbReference type="EC" id="1.1.1.270"/>
    </reaction>
    <physiologicalReaction direction="left-to-right" evidence="3">
        <dbReference type="Rhea" id="RHEA:36380"/>
    </physiologicalReaction>
</comment>
<comment type="catalytic activity">
    <reaction evidence="3">
        <text>zymosterone + NADPH + H(+) = zymosterol + NADP(+)</text>
        <dbReference type="Rhea" id="RHEA:33459"/>
        <dbReference type="ChEBI" id="CHEBI:15378"/>
        <dbReference type="ChEBI" id="CHEBI:18252"/>
        <dbReference type="ChEBI" id="CHEBI:52386"/>
        <dbReference type="ChEBI" id="CHEBI:57783"/>
        <dbReference type="ChEBI" id="CHEBI:58349"/>
    </reaction>
    <physiologicalReaction direction="left-to-right" evidence="3">
        <dbReference type="Rhea" id="RHEA:33460"/>
    </physiologicalReaction>
</comment>
<comment type="catalytic activity">
    <reaction evidence="3">
        <text>5alpha-cholest-8-en-3-one + NADPH + H(+) = 5alpha-cholest-8-en-3beta-ol + NADP(+)</text>
        <dbReference type="Rhea" id="RHEA:46852"/>
        <dbReference type="ChEBI" id="CHEBI:15378"/>
        <dbReference type="ChEBI" id="CHEBI:16608"/>
        <dbReference type="ChEBI" id="CHEBI:57783"/>
        <dbReference type="ChEBI" id="CHEBI:58349"/>
        <dbReference type="ChEBI" id="CHEBI:87056"/>
    </reaction>
    <physiologicalReaction direction="left-to-right" evidence="3">
        <dbReference type="Rhea" id="RHEA:46853"/>
    </physiologicalReaction>
</comment>
<comment type="catalytic activity">
    <reaction evidence="3">
        <text>5alpha-androstane-3beta,17beta-diol + NADP(+) = 17beta-hydroxy-5alpha-androstan-3-one + NADPH + H(+)</text>
        <dbReference type="Rhea" id="RHEA:16297"/>
        <dbReference type="ChEBI" id="CHEBI:15378"/>
        <dbReference type="ChEBI" id="CHEBI:16330"/>
        <dbReference type="ChEBI" id="CHEBI:18329"/>
        <dbReference type="ChEBI" id="CHEBI:57783"/>
        <dbReference type="ChEBI" id="CHEBI:58349"/>
        <dbReference type="EC" id="1.1.1.210"/>
    </reaction>
    <physiologicalReaction direction="right-to-left" evidence="3">
        <dbReference type="Rhea" id="RHEA:16299"/>
    </physiologicalReaction>
</comment>
<comment type="catalytic activity">
    <reaction evidence="2">
        <text>5alpha-androstane-3alpha,17beta-diol + NADP(+) = 17beta-hydroxy-5alpha-androstan-3-one + NADPH + H(+)</text>
        <dbReference type="Rhea" id="RHEA:42116"/>
        <dbReference type="ChEBI" id="CHEBI:15378"/>
        <dbReference type="ChEBI" id="CHEBI:16330"/>
        <dbReference type="ChEBI" id="CHEBI:36713"/>
        <dbReference type="ChEBI" id="CHEBI:57783"/>
        <dbReference type="ChEBI" id="CHEBI:58349"/>
    </reaction>
    <physiologicalReaction direction="right-to-left" evidence="2">
        <dbReference type="Rhea" id="RHEA:42118"/>
    </physiologicalReaction>
</comment>
<comment type="pathway">
    <text evidence="7">Steroid biosynthesis; estrogen biosynthesis.</text>
</comment>
<comment type="pathway">
    <text evidence="3">Steroid biosynthesis; zymosterol biosynthesis; zymosterol from lanosterol: step 5/6.</text>
</comment>
<comment type="subunit">
    <text evidence="6">Binds to the short form of prolactin receptor.</text>
</comment>
<comment type="subcellular location">
    <subcellularLocation>
        <location evidence="3">Endoplasmic reticulum membrane</location>
        <topology evidence="4">Single-pass membrane protein</topology>
    </subcellularLocation>
</comment>
<comment type="tissue specificity">
    <text evidence="6">Most abundant in ovaries of pregnant animals.</text>
</comment>
<comment type="PTM">
    <text evidence="6">Phosphorylated.</text>
</comment>
<comment type="similarity">
    <text evidence="9">Belongs to the short-chain dehydrogenases/reductases (SDR) family. ERG27 subfamily.</text>
</comment>
<name>DHB7_RAT</name>
<evidence type="ECO:0000250" key="1"/>
<evidence type="ECO:0000250" key="2">
    <source>
        <dbReference type="UniProtKB" id="O88736"/>
    </source>
</evidence>
<evidence type="ECO:0000250" key="3">
    <source>
        <dbReference type="UniProtKB" id="P56937"/>
    </source>
</evidence>
<evidence type="ECO:0000255" key="4"/>
<evidence type="ECO:0000269" key="5">
    <source>
    </source>
</evidence>
<evidence type="ECO:0000269" key="6">
    <source>
    </source>
</evidence>
<evidence type="ECO:0000269" key="7">
    <source>
    </source>
</evidence>
<evidence type="ECO:0000303" key="8">
    <source>
    </source>
</evidence>
<evidence type="ECO:0000305" key="9"/>
<evidence type="ECO:0000305" key="10">
    <source>
    </source>
</evidence>
<evidence type="ECO:0000305" key="11">
    <source>
    </source>
</evidence>
<reference key="1">
    <citation type="journal article" date="1996" name="J. Biol. Chem.">
        <title>Cloning and characterization of an ovarian-specific protein that associates with the short form of the prolactin receptor.</title>
        <authorList>
            <person name="Duan W.R."/>
            <person name="Linzer D.I.H."/>
            <person name="Gibori G."/>
        </authorList>
    </citation>
    <scope>NUCLEOTIDE SEQUENCE [MRNA]</scope>
    <scope>PROTEIN SEQUENCE OF 1-18</scope>
    <scope>TISSUE SPECIFICITY</scope>
    <scope>SUBUNIT</scope>
    <scope>PHOSPHORYLATION</scope>
    <source>
        <strain>Sprague-Dawley</strain>
        <tissue>Corpus luteum</tissue>
    </source>
</reference>
<reference key="2">
    <citation type="journal article" date="1981" name="Arch. Biochem. Biophys.">
        <title>Solubilization and partial purification of a microsomal 3-ketosteroid reductase of cholesterol biosynthesis.</title>
        <authorList>
            <person name="Billheimer J.T."/>
            <person name="Alcorn M."/>
            <person name="Gaylor J.L."/>
        </authorList>
    </citation>
    <scope>FUNCTION</scope>
    <scope>CATALYTIC ACTIVITY</scope>
</reference>
<reference key="3">
    <citation type="journal article" date="1998" name="Mol. Endocrinol.">
        <title>Expression cloning of a novel estrogenic mouse 17 beta-hydroxysteroid dehydrogenase/17-ketosteroid reductase (m17HSD7), previously described as a prolactin receptor-associated protein (PRAP) in rat.</title>
        <authorList>
            <person name="Nokelainen P."/>
            <person name="Peltoketo H."/>
            <person name="Vihko R."/>
            <person name="Vihko P."/>
        </authorList>
    </citation>
    <scope>CATALYTIC ACTIVITY</scope>
    <scope>FUNCTION</scope>
</reference>
<dbReference type="EC" id="1.1.1.270" evidence="10"/>
<dbReference type="EC" id="1.1.1.210" evidence="3"/>
<dbReference type="EC" id="1.1.1.62" evidence="7"/>
<dbReference type="EMBL" id="U44803">
    <property type="protein sequence ID" value="AAC52623.1"/>
    <property type="molecule type" value="mRNA"/>
</dbReference>
<dbReference type="RefSeq" id="NP_001416467.1">
    <property type="nucleotide sequence ID" value="NM_001429538.1"/>
</dbReference>
<dbReference type="RefSeq" id="NP_001416468.1">
    <property type="nucleotide sequence ID" value="NM_001429539.1"/>
</dbReference>
<dbReference type="RefSeq" id="NP_001416469.1">
    <property type="nucleotide sequence ID" value="NM_001429540.1"/>
</dbReference>
<dbReference type="RefSeq" id="NP_058931.1">
    <property type="nucleotide sequence ID" value="NM_017235.3"/>
</dbReference>
<dbReference type="SMR" id="Q62904"/>
<dbReference type="FunCoup" id="Q62904">
    <property type="interactions" value="194"/>
</dbReference>
<dbReference type="STRING" id="10116.ENSRNOP00000003812"/>
<dbReference type="SwissLipids" id="SLP:000001306"/>
<dbReference type="GlyCosmos" id="Q62904">
    <property type="glycosylation" value="3 sites, No reported glycans"/>
</dbReference>
<dbReference type="GlyGen" id="Q62904">
    <property type="glycosylation" value="3 sites"/>
</dbReference>
<dbReference type="iPTMnet" id="Q62904"/>
<dbReference type="PhosphoSitePlus" id="Q62904"/>
<dbReference type="PaxDb" id="10116-ENSRNOP00000003812"/>
<dbReference type="GeneID" id="29540"/>
<dbReference type="KEGG" id="rno:29540"/>
<dbReference type="UCSC" id="RGD:2837">
    <property type="organism name" value="rat"/>
</dbReference>
<dbReference type="AGR" id="RGD:2837"/>
<dbReference type="CTD" id="51478"/>
<dbReference type="RGD" id="2837">
    <property type="gene designation" value="Hsd17b7"/>
</dbReference>
<dbReference type="eggNOG" id="KOG1478">
    <property type="taxonomic scope" value="Eukaryota"/>
</dbReference>
<dbReference type="HOGENOM" id="CLU_029944_2_0_1"/>
<dbReference type="InParanoid" id="Q62904"/>
<dbReference type="PhylomeDB" id="Q62904"/>
<dbReference type="TreeFam" id="TF105433"/>
<dbReference type="Reactome" id="R-RNO-191273">
    <property type="pathway name" value="Cholesterol biosynthesis"/>
</dbReference>
<dbReference type="UniPathway" id="UPA00769"/>
<dbReference type="UniPathway" id="UPA00770">
    <property type="reaction ID" value="UER00758"/>
</dbReference>
<dbReference type="PRO" id="PR:Q62904"/>
<dbReference type="Proteomes" id="UP000002494">
    <property type="component" value="Unplaced"/>
</dbReference>
<dbReference type="GO" id="GO:0005783">
    <property type="term" value="C:endoplasmic reticulum"/>
    <property type="evidence" value="ECO:0000266"/>
    <property type="project" value="RGD"/>
</dbReference>
<dbReference type="GO" id="GO:0005789">
    <property type="term" value="C:endoplasmic reticulum membrane"/>
    <property type="evidence" value="ECO:0000250"/>
    <property type="project" value="UniProtKB"/>
</dbReference>
<dbReference type="GO" id="GO:0000253">
    <property type="term" value="F:3-beta-hydroxysteroid 3-dehydrogenase (NADP+) activity"/>
    <property type="evidence" value="ECO:0000250"/>
    <property type="project" value="UniProtKB"/>
</dbReference>
<dbReference type="GO" id="GO:0047024">
    <property type="term" value="F:5-alpha-androstane-3-beta,17-beta-diol dehydrogenase (NADP+) activity"/>
    <property type="evidence" value="ECO:0000250"/>
    <property type="project" value="UniProtKB"/>
</dbReference>
<dbReference type="GO" id="GO:0004303">
    <property type="term" value="F:estradiol 17-beta-dehydrogenase [NAD(P)+] activity"/>
    <property type="evidence" value="ECO:0000314"/>
    <property type="project" value="UniProtKB"/>
</dbReference>
<dbReference type="GO" id="GO:0005148">
    <property type="term" value="F:prolactin receptor binding"/>
    <property type="evidence" value="ECO:0000353"/>
    <property type="project" value="RGD"/>
</dbReference>
<dbReference type="GO" id="GO:0008209">
    <property type="term" value="P:androgen metabolic process"/>
    <property type="evidence" value="ECO:0000250"/>
    <property type="project" value="UniProtKB"/>
</dbReference>
<dbReference type="GO" id="GO:0007420">
    <property type="term" value="P:brain development"/>
    <property type="evidence" value="ECO:0000266"/>
    <property type="project" value="RGD"/>
</dbReference>
<dbReference type="GO" id="GO:0030154">
    <property type="term" value="P:cell differentiation"/>
    <property type="evidence" value="ECO:0000266"/>
    <property type="project" value="RGD"/>
</dbReference>
<dbReference type="GO" id="GO:0006695">
    <property type="term" value="P:cholesterol biosynthetic process"/>
    <property type="evidence" value="ECO:0000250"/>
    <property type="project" value="UniProtKB"/>
</dbReference>
<dbReference type="GO" id="GO:0048568">
    <property type="term" value="P:embryonic organ development"/>
    <property type="evidence" value="ECO:0000266"/>
    <property type="project" value="RGD"/>
</dbReference>
<dbReference type="GO" id="GO:0048706">
    <property type="term" value="P:embryonic skeletal system development"/>
    <property type="evidence" value="ECO:0000266"/>
    <property type="project" value="RGD"/>
</dbReference>
<dbReference type="GO" id="GO:0006703">
    <property type="term" value="P:estrogen biosynthetic process"/>
    <property type="evidence" value="ECO:0000314"/>
    <property type="project" value="UniProtKB"/>
</dbReference>
<dbReference type="GO" id="GO:0021766">
    <property type="term" value="P:hippocampus development"/>
    <property type="evidence" value="ECO:0000270"/>
    <property type="project" value="RGD"/>
</dbReference>
<dbReference type="GO" id="GO:0060135">
    <property type="term" value="P:maternal process involved in female pregnancy"/>
    <property type="evidence" value="ECO:0000270"/>
    <property type="project" value="RGD"/>
</dbReference>
<dbReference type="GO" id="GO:0007399">
    <property type="term" value="P:nervous system development"/>
    <property type="evidence" value="ECO:0000266"/>
    <property type="project" value="RGD"/>
</dbReference>
<dbReference type="GO" id="GO:0032355">
    <property type="term" value="P:response to estradiol"/>
    <property type="evidence" value="ECO:0000270"/>
    <property type="project" value="RGD"/>
</dbReference>
<dbReference type="GO" id="GO:1990637">
    <property type="term" value="P:response to prolactin"/>
    <property type="evidence" value="ECO:0000270"/>
    <property type="project" value="RGD"/>
</dbReference>
<dbReference type="GO" id="GO:0009410">
    <property type="term" value="P:response to xenobiotic stimulus"/>
    <property type="evidence" value="ECO:0000270"/>
    <property type="project" value="RGD"/>
</dbReference>
<dbReference type="CDD" id="cd08941">
    <property type="entry name" value="3KS_SDR_c"/>
    <property type="match status" value="1"/>
</dbReference>
<dbReference type="FunFam" id="3.40.50.720:FF:000289">
    <property type="entry name" value="Hydroxysteroid 17-beta dehydrogenase 7"/>
    <property type="match status" value="1"/>
</dbReference>
<dbReference type="Gene3D" id="3.40.50.720">
    <property type="entry name" value="NAD(P)-binding Rossmann-like Domain"/>
    <property type="match status" value="1"/>
</dbReference>
<dbReference type="InterPro" id="IPR052834">
    <property type="entry name" value="3KSR/17beta-HSD"/>
</dbReference>
<dbReference type="InterPro" id="IPR042829">
    <property type="entry name" value="HSD17B7/Erg27"/>
</dbReference>
<dbReference type="InterPro" id="IPR036291">
    <property type="entry name" value="NAD(P)-bd_dom_sf"/>
</dbReference>
<dbReference type="InterPro" id="IPR002347">
    <property type="entry name" value="SDR_fam"/>
</dbReference>
<dbReference type="PANTHER" id="PTHR44442">
    <property type="entry name" value="3-KETO-STEROID REDUCTASE"/>
    <property type="match status" value="1"/>
</dbReference>
<dbReference type="PANTHER" id="PTHR44442:SF1">
    <property type="entry name" value="3-KETO-STEROID REDUCTASE_17-BETA-HYDROXYSTEROID DEHYDROGENASE 7"/>
    <property type="match status" value="1"/>
</dbReference>
<dbReference type="Pfam" id="PF00106">
    <property type="entry name" value="adh_short"/>
    <property type="match status" value="1"/>
</dbReference>
<dbReference type="PRINTS" id="PR00081">
    <property type="entry name" value="GDHRDH"/>
</dbReference>
<dbReference type="SUPFAM" id="SSF51735">
    <property type="entry name" value="NAD(P)-binding Rossmann-fold domains"/>
    <property type="match status" value="1"/>
</dbReference>